<keyword id="KW-0653">Protein transport</keyword>
<keyword id="KW-1185">Reference proteome</keyword>
<keyword id="KW-0813">Transport</keyword>
<comment type="similarity">
    <text evidence="1">Belongs to the Rab GDI family.</text>
</comment>
<feature type="chain" id="PRO_0000056685" description="Probable secretory pathway GDP dissociation inhibitor 1">
    <location>
        <begin position="1"/>
        <end position="440"/>
    </location>
</feature>
<organism>
    <name type="scientific">Schizosaccharomyces pombe (strain 972 / ATCC 24843)</name>
    <name type="common">Fission yeast</name>
    <dbReference type="NCBI Taxonomy" id="284812"/>
    <lineage>
        <taxon>Eukaryota</taxon>
        <taxon>Fungi</taxon>
        <taxon>Dikarya</taxon>
        <taxon>Ascomycota</taxon>
        <taxon>Taphrinomycotina</taxon>
        <taxon>Schizosaccharomycetes</taxon>
        <taxon>Schizosaccharomycetales</taxon>
        <taxon>Schizosaccharomycetaceae</taxon>
        <taxon>Schizosaccharomyces</taxon>
    </lineage>
</organism>
<proteinExistence type="inferred from homology"/>
<name>GDI1_SCHPO</name>
<evidence type="ECO:0000305" key="1"/>
<sequence length="440" mass="49556">MDEEYDVIVLGTGLTECVLSGLLSVDGKKVLHIDRNDYYGADSASLNLTQLYALFRPGEQRPESLGRDRDWCVDLVPKFLMANGDLTNILIYTDVTRYIEFKQIAGSYVYRDGRIAKVPGNEMEALKSPLMSLFEKRRAKKFLEWVNNYREDDPSTYKDINIDRDSMESVFKKFGLQSGTQDFIGHAMALYLDDAYLKKPARETRERILLYASSIAKFGKSPYIYPLYGLGELPQGFARLSAIYGGTYMLNQPVDEIVYGDDGVAIGVRSGDQVAKAKQIIGDPSYFREKVRSVGRLVRAICILNHPIPNTDNLDSVQIIIPQNQVKRKHDIYIAGISSVHNVCPKGYYLAIISTIVETANPLSEIAPGLKLLGPVVESFSRVQEIYEPVTDGTKDQCYISKSVDATSHFETLTCDVRDIYKRMTGTDLVLKQRPKMEDQ</sequence>
<protein>
    <recommendedName>
        <fullName>Probable secretory pathway GDP dissociation inhibitor 1</fullName>
    </recommendedName>
</protein>
<reference key="1">
    <citation type="journal article" date="2002" name="Nature">
        <title>The genome sequence of Schizosaccharomyces pombe.</title>
        <authorList>
            <person name="Wood V."/>
            <person name="Gwilliam R."/>
            <person name="Rajandream M.A."/>
            <person name="Lyne M.H."/>
            <person name="Lyne R."/>
            <person name="Stewart A."/>
            <person name="Sgouros J.G."/>
            <person name="Peat N."/>
            <person name="Hayles J."/>
            <person name="Baker S.G."/>
            <person name="Basham D."/>
            <person name="Bowman S."/>
            <person name="Brooks K."/>
            <person name="Brown D."/>
            <person name="Brown S."/>
            <person name="Chillingworth T."/>
            <person name="Churcher C.M."/>
            <person name="Collins M."/>
            <person name="Connor R."/>
            <person name="Cronin A."/>
            <person name="Davis P."/>
            <person name="Feltwell T."/>
            <person name="Fraser A."/>
            <person name="Gentles S."/>
            <person name="Goble A."/>
            <person name="Hamlin N."/>
            <person name="Harris D.E."/>
            <person name="Hidalgo J."/>
            <person name="Hodgson G."/>
            <person name="Holroyd S."/>
            <person name="Hornsby T."/>
            <person name="Howarth S."/>
            <person name="Huckle E.J."/>
            <person name="Hunt S."/>
            <person name="Jagels K."/>
            <person name="James K.D."/>
            <person name="Jones L."/>
            <person name="Jones M."/>
            <person name="Leather S."/>
            <person name="McDonald S."/>
            <person name="McLean J."/>
            <person name="Mooney P."/>
            <person name="Moule S."/>
            <person name="Mungall K.L."/>
            <person name="Murphy L.D."/>
            <person name="Niblett D."/>
            <person name="Odell C."/>
            <person name="Oliver K."/>
            <person name="O'Neil S."/>
            <person name="Pearson D."/>
            <person name="Quail M.A."/>
            <person name="Rabbinowitsch E."/>
            <person name="Rutherford K.M."/>
            <person name="Rutter S."/>
            <person name="Saunders D."/>
            <person name="Seeger K."/>
            <person name="Sharp S."/>
            <person name="Skelton J."/>
            <person name="Simmonds M.N."/>
            <person name="Squares R."/>
            <person name="Squares S."/>
            <person name="Stevens K."/>
            <person name="Taylor K."/>
            <person name="Taylor R.G."/>
            <person name="Tivey A."/>
            <person name="Walsh S.V."/>
            <person name="Warren T."/>
            <person name="Whitehead S."/>
            <person name="Woodward J.R."/>
            <person name="Volckaert G."/>
            <person name="Aert R."/>
            <person name="Robben J."/>
            <person name="Grymonprez B."/>
            <person name="Weltjens I."/>
            <person name="Vanstreels E."/>
            <person name="Rieger M."/>
            <person name="Schaefer M."/>
            <person name="Mueller-Auer S."/>
            <person name="Gabel C."/>
            <person name="Fuchs M."/>
            <person name="Duesterhoeft A."/>
            <person name="Fritzc C."/>
            <person name="Holzer E."/>
            <person name="Moestl D."/>
            <person name="Hilbert H."/>
            <person name="Borzym K."/>
            <person name="Langer I."/>
            <person name="Beck A."/>
            <person name="Lehrach H."/>
            <person name="Reinhardt R."/>
            <person name="Pohl T.M."/>
            <person name="Eger P."/>
            <person name="Zimmermann W."/>
            <person name="Wedler H."/>
            <person name="Wambutt R."/>
            <person name="Purnelle B."/>
            <person name="Goffeau A."/>
            <person name="Cadieu E."/>
            <person name="Dreano S."/>
            <person name="Gloux S."/>
            <person name="Lelaure V."/>
            <person name="Mottier S."/>
            <person name="Galibert F."/>
            <person name="Aves S.J."/>
            <person name="Xiang Z."/>
            <person name="Hunt C."/>
            <person name="Moore K."/>
            <person name="Hurst S.M."/>
            <person name="Lucas M."/>
            <person name="Rochet M."/>
            <person name="Gaillardin C."/>
            <person name="Tallada V.A."/>
            <person name="Garzon A."/>
            <person name="Thode G."/>
            <person name="Daga R.R."/>
            <person name="Cruzado L."/>
            <person name="Jimenez J."/>
            <person name="Sanchez M."/>
            <person name="del Rey F."/>
            <person name="Benito J."/>
            <person name="Dominguez A."/>
            <person name="Revuelta J.L."/>
            <person name="Moreno S."/>
            <person name="Armstrong J."/>
            <person name="Forsburg S.L."/>
            <person name="Cerutti L."/>
            <person name="Lowe T."/>
            <person name="McCombie W.R."/>
            <person name="Paulsen I."/>
            <person name="Potashkin J."/>
            <person name="Shpakovski G.V."/>
            <person name="Ussery D."/>
            <person name="Barrell B.G."/>
            <person name="Nurse P."/>
        </authorList>
    </citation>
    <scope>NUCLEOTIDE SEQUENCE [LARGE SCALE GENOMIC DNA]</scope>
    <source>
        <strain>972 / ATCC 24843</strain>
    </source>
</reference>
<accession>Q10305</accession>
<dbReference type="EMBL" id="CU329670">
    <property type="protein sequence ID" value="CAA93612.1"/>
    <property type="molecule type" value="Genomic_DNA"/>
</dbReference>
<dbReference type="PIR" id="T38215">
    <property type="entry name" value="T38215"/>
</dbReference>
<dbReference type="RefSeq" id="NP_593749.1">
    <property type="nucleotide sequence ID" value="NM_001019180.2"/>
</dbReference>
<dbReference type="SMR" id="Q10305"/>
<dbReference type="BioGRID" id="278221">
    <property type="interactions" value="9"/>
</dbReference>
<dbReference type="FunCoup" id="Q10305">
    <property type="interactions" value="673"/>
</dbReference>
<dbReference type="STRING" id="284812.Q10305"/>
<dbReference type="iPTMnet" id="Q10305"/>
<dbReference type="PaxDb" id="4896-SPAC22H10.12c.1"/>
<dbReference type="EnsemblFungi" id="SPAC22H10.12c.1">
    <property type="protein sequence ID" value="SPAC22H10.12c.1:pep"/>
    <property type="gene ID" value="SPAC22H10.12c"/>
</dbReference>
<dbReference type="GeneID" id="2541727"/>
<dbReference type="KEGG" id="spo:2541727"/>
<dbReference type="PomBase" id="SPAC22H10.12c">
    <property type="gene designation" value="gdi1"/>
</dbReference>
<dbReference type="VEuPathDB" id="FungiDB:SPAC22H10.12c"/>
<dbReference type="eggNOG" id="KOG1439">
    <property type="taxonomic scope" value="Eukaryota"/>
</dbReference>
<dbReference type="HOGENOM" id="CLU_021695_0_0_1"/>
<dbReference type="InParanoid" id="Q10305"/>
<dbReference type="OMA" id="FETKAKM"/>
<dbReference type="PhylomeDB" id="Q10305"/>
<dbReference type="Reactome" id="R-SPO-6798695">
    <property type="pathway name" value="Neutrophil degranulation"/>
</dbReference>
<dbReference type="Reactome" id="R-SPO-8876198">
    <property type="pathway name" value="RAB GEFs exchange GTP for GDP on RABs"/>
</dbReference>
<dbReference type="PRO" id="PR:Q10305"/>
<dbReference type="Proteomes" id="UP000002485">
    <property type="component" value="Chromosome I"/>
</dbReference>
<dbReference type="GO" id="GO:0032153">
    <property type="term" value="C:cell division site"/>
    <property type="evidence" value="ECO:0007005"/>
    <property type="project" value="PomBase"/>
</dbReference>
<dbReference type="GO" id="GO:0005737">
    <property type="term" value="C:cytoplasm"/>
    <property type="evidence" value="ECO:0007005"/>
    <property type="project" value="PomBase"/>
</dbReference>
<dbReference type="GO" id="GO:0005829">
    <property type="term" value="C:cytosol"/>
    <property type="evidence" value="ECO:0007005"/>
    <property type="project" value="PomBase"/>
</dbReference>
<dbReference type="GO" id="GO:0005093">
    <property type="term" value="F:Rab GDP-dissociation inhibitor activity"/>
    <property type="evidence" value="ECO:0000318"/>
    <property type="project" value="GO_Central"/>
</dbReference>
<dbReference type="GO" id="GO:0006886">
    <property type="term" value="P:intracellular protein transport"/>
    <property type="evidence" value="ECO:0000305"/>
    <property type="project" value="PomBase"/>
</dbReference>
<dbReference type="GO" id="GO:0007264">
    <property type="term" value="P:small GTPase-mediated signal transduction"/>
    <property type="evidence" value="ECO:0007669"/>
    <property type="project" value="InterPro"/>
</dbReference>
<dbReference type="GO" id="GO:0016192">
    <property type="term" value="P:vesicle-mediated transport"/>
    <property type="evidence" value="ECO:0000318"/>
    <property type="project" value="GO_Central"/>
</dbReference>
<dbReference type="FunFam" id="1.10.405.10:FF:000001">
    <property type="entry name" value="Rab GDP dissociation inhibitor"/>
    <property type="match status" value="1"/>
</dbReference>
<dbReference type="Gene3D" id="3.50.50.60">
    <property type="entry name" value="FAD/NAD(P)-binding domain"/>
    <property type="match status" value="1"/>
</dbReference>
<dbReference type="Gene3D" id="1.10.405.10">
    <property type="entry name" value="Guanine Nucleotide Dissociation Inhibitor, domain 1"/>
    <property type="match status" value="1"/>
</dbReference>
<dbReference type="Gene3D" id="3.30.519.10">
    <property type="entry name" value="Guanine Nucleotide Dissociation Inhibitor, domain 2"/>
    <property type="match status" value="1"/>
</dbReference>
<dbReference type="InterPro" id="IPR036188">
    <property type="entry name" value="FAD/NAD-bd_sf"/>
</dbReference>
<dbReference type="InterPro" id="IPR018203">
    <property type="entry name" value="GDP_dissociation_inhibitor"/>
</dbReference>
<dbReference type="InterPro" id="IPR000806">
    <property type="entry name" value="RabGDI"/>
</dbReference>
<dbReference type="PANTHER" id="PTHR11787:SF8">
    <property type="entry name" value="RAB GDP DISSOCIATION INHIBITOR"/>
    <property type="match status" value="1"/>
</dbReference>
<dbReference type="PANTHER" id="PTHR11787">
    <property type="entry name" value="RAB GDP-DISSOCIATION INHIBITOR"/>
    <property type="match status" value="1"/>
</dbReference>
<dbReference type="Pfam" id="PF00996">
    <property type="entry name" value="GDI"/>
    <property type="match status" value="1"/>
</dbReference>
<dbReference type="PRINTS" id="PR00892">
    <property type="entry name" value="RABGDI"/>
</dbReference>
<dbReference type="PRINTS" id="PR00891">
    <property type="entry name" value="RABGDIREP"/>
</dbReference>
<dbReference type="SUPFAM" id="SSF54373">
    <property type="entry name" value="FAD-linked reductases, C-terminal domain"/>
    <property type="match status" value="1"/>
</dbReference>
<dbReference type="SUPFAM" id="SSF51905">
    <property type="entry name" value="FAD/NAD(P)-binding domain"/>
    <property type="match status" value="2"/>
</dbReference>
<gene>
    <name type="primary">gdi1</name>
    <name type="synonym">sec19</name>
    <name type="ORF">SPAC22H10.12c</name>
</gene>